<proteinExistence type="inferred from homology"/>
<reference key="1">
    <citation type="journal article" date="1997" name="J. Bacteriol.">
        <title>Identification and characterization of cell wall-cell division gene clusters in pathogenic Gram-positive cocci.</title>
        <authorList>
            <person name="Pucci M.J."/>
            <person name="Thanassi J.A."/>
            <person name="Discotto L.F."/>
            <person name="Kessler R.E."/>
            <person name="Dougherty T.J."/>
        </authorList>
    </citation>
    <scope>NUCLEOTIDE SEQUENCE [GENOMIC DNA]</scope>
    <source>
        <strain>A24836</strain>
    </source>
</reference>
<reference key="2">
    <citation type="journal article" date="2003" name="Science">
        <title>Role of mobile DNA in the evolution of vancomycin-resistant Enterococcus faecalis.</title>
        <authorList>
            <person name="Paulsen I.T."/>
            <person name="Banerjei L."/>
            <person name="Myers G.S.A."/>
            <person name="Nelson K.E."/>
            <person name="Seshadri R."/>
            <person name="Read T.D."/>
            <person name="Fouts D.E."/>
            <person name="Eisen J.A."/>
            <person name="Gill S.R."/>
            <person name="Heidelberg J.F."/>
            <person name="Tettelin H."/>
            <person name="Dodson R.J."/>
            <person name="Umayam L.A."/>
            <person name="Brinkac L.M."/>
            <person name="Beanan M.J."/>
            <person name="Daugherty S.C."/>
            <person name="DeBoy R.T."/>
            <person name="Durkin S.A."/>
            <person name="Kolonay J.F."/>
            <person name="Madupu R."/>
            <person name="Nelson W.C."/>
            <person name="Vamathevan J.J."/>
            <person name="Tran B."/>
            <person name="Upton J."/>
            <person name="Hansen T."/>
            <person name="Shetty J."/>
            <person name="Khouri H.M."/>
            <person name="Utterback T.R."/>
            <person name="Radune D."/>
            <person name="Ketchum K.A."/>
            <person name="Dougherty B.A."/>
            <person name="Fraser C.M."/>
        </authorList>
    </citation>
    <scope>NUCLEOTIDE SEQUENCE [LARGE SCALE GENOMIC DNA]</scope>
    <source>
        <strain>ATCC 700802 / V583</strain>
    </source>
</reference>
<keyword id="KW-0131">Cell cycle</keyword>
<keyword id="KW-0132">Cell division</keyword>
<keyword id="KW-1003">Cell membrane</keyword>
<keyword id="KW-0472">Membrane</keyword>
<keyword id="KW-1185">Reference proteome</keyword>
<sequence length="440" mass="48178">MAKTGMYVGLDIGTTSVKVVVAEYIEGQMNIIGVGNAKSDGLNRGIVVDIDQTVQAIQRAVRQAEEKAGIQIKSVNVGLPANLLEVESCQGMIAVSSESKEITDEDVRNVASAALVRSTPPERQIVAILPQDFTVDGFEGIKDPRGMLGVRMEMFGVVYTGPKTIIHNIRKCVEKAGLGINELVITPLALTETILTDGEKDFGTIVIDMGGGQTTTSVIHDKQLKFTHVNQEGGEFITKDISIVLNTSFNNAEALKINYGDAYPERTSANEEFPVDVIGKSEPVRVDERYLSEIIEARVEQILRKSKEVLDEIDAFELPGGVVLTGGAASMPGIVDLAQEIFEANVKLYVPNHMGLRNPVFANVISIVEYSAQLNDIYHIAKYAIPGEKSKPAQSVAVQQEVRYDTYAEQPQEEYEEFNERESGEKVTGKIKDFFSNIFD</sequence>
<gene>
    <name evidence="1" type="primary">ftsA</name>
    <name type="ordered locus">EF_0996</name>
</gene>
<organism>
    <name type="scientific">Enterococcus faecalis (strain ATCC 700802 / V583)</name>
    <dbReference type="NCBI Taxonomy" id="226185"/>
    <lineage>
        <taxon>Bacteria</taxon>
        <taxon>Bacillati</taxon>
        <taxon>Bacillota</taxon>
        <taxon>Bacilli</taxon>
        <taxon>Lactobacillales</taxon>
        <taxon>Enterococcaceae</taxon>
        <taxon>Enterococcus</taxon>
    </lineage>
</organism>
<dbReference type="EMBL" id="U94707">
    <property type="protein sequence ID" value="AAC45638.1"/>
    <property type="status" value="ALT_INIT"/>
    <property type="molecule type" value="Genomic_DNA"/>
</dbReference>
<dbReference type="EMBL" id="AE016830">
    <property type="protein sequence ID" value="AAO80802.1"/>
    <property type="molecule type" value="Genomic_DNA"/>
</dbReference>
<dbReference type="RefSeq" id="NP_814732.1">
    <property type="nucleotide sequence ID" value="NC_004668.1"/>
</dbReference>
<dbReference type="RefSeq" id="WP_002355898.1">
    <property type="nucleotide sequence ID" value="NZ_KE136527.1"/>
</dbReference>
<dbReference type="SMR" id="O07111"/>
<dbReference type="STRING" id="226185.EF_0996"/>
<dbReference type="DNASU" id="1199884"/>
<dbReference type="EnsemblBacteria" id="AAO80802">
    <property type="protein sequence ID" value="AAO80802"/>
    <property type="gene ID" value="EF_0996"/>
</dbReference>
<dbReference type="GeneID" id="60893383"/>
<dbReference type="KEGG" id="efa:EF0996"/>
<dbReference type="PATRIC" id="fig|226185.45.peg.3202"/>
<dbReference type="eggNOG" id="COG0849">
    <property type="taxonomic scope" value="Bacteria"/>
</dbReference>
<dbReference type="HOGENOM" id="CLU_037850_1_1_9"/>
<dbReference type="Proteomes" id="UP000001415">
    <property type="component" value="Chromosome"/>
</dbReference>
<dbReference type="GO" id="GO:0032153">
    <property type="term" value="C:cell division site"/>
    <property type="evidence" value="ECO:0007669"/>
    <property type="project" value="UniProtKB-UniRule"/>
</dbReference>
<dbReference type="GO" id="GO:0009898">
    <property type="term" value="C:cytoplasmic side of plasma membrane"/>
    <property type="evidence" value="ECO:0007669"/>
    <property type="project" value="UniProtKB-UniRule"/>
</dbReference>
<dbReference type="GO" id="GO:0043093">
    <property type="term" value="P:FtsZ-dependent cytokinesis"/>
    <property type="evidence" value="ECO:0007669"/>
    <property type="project" value="UniProtKB-UniRule"/>
</dbReference>
<dbReference type="CDD" id="cd24048">
    <property type="entry name" value="ASKHA_NBD_FtsA"/>
    <property type="match status" value="1"/>
</dbReference>
<dbReference type="Gene3D" id="3.30.420.40">
    <property type="match status" value="2"/>
</dbReference>
<dbReference type="HAMAP" id="MF_02033">
    <property type="entry name" value="FtsA"/>
    <property type="match status" value="1"/>
</dbReference>
<dbReference type="InterPro" id="IPR043129">
    <property type="entry name" value="ATPase_NBD"/>
</dbReference>
<dbReference type="InterPro" id="IPR020823">
    <property type="entry name" value="Cell_div_FtsA"/>
</dbReference>
<dbReference type="InterPro" id="IPR050696">
    <property type="entry name" value="FtsA/MreB"/>
</dbReference>
<dbReference type="InterPro" id="IPR021873">
    <property type="entry name" value="FtsA_C"/>
</dbReference>
<dbReference type="InterPro" id="IPR003494">
    <property type="entry name" value="SHS2_FtsA"/>
</dbReference>
<dbReference type="NCBIfam" id="TIGR01174">
    <property type="entry name" value="ftsA"/>
    <property type="match status" value="1"/>
</dbReference>
<dbReference type="PANTHER" id="PTHR32432:SF4">
    <property type="entry name" value="CELL DIVISION PROTEIN FTSA"/>
    <property type="match status" value="1"/>
</dbReference>
<dbReference type="PANTHER" id="PTHR32432">
    <property type="entry name" value="CELL DIVISION PROTEIN FTSA-RELATED"/>
    <property type="match status" value="1"/>
</dbReference>
<dbReference type="Pfam" id="PF14450">
    <property type="entry name" value="FtsA"/>
    <property type="match status" value="1"/>
</dbReference>
<dbReference type="Pfam" id="PF11983">
    <property type="entry name" value="FtsA_C"/>
    <property type="match status" value="1"/>
</dbReference>
<dbReference type="Pfam" id="PF02491">
    <property type="entry name" value="SHS2_FTSA"/>
    <property type="match status" value="1"/>
</dbReference>
<dbReference type="PIRSF" id="PIRSF003101">
    <property type="entry name" value="FtsA"/>
    <property type="match status" value="1"/>
</dbReference>
<dbReference type="SMART" id="SM00842">
    <property type="entry name" value="FtsA"/>
    <property type="match status" value="1"/>
</dbReference>
<dbReference type="SUPFAM" id="SSF53067">
    <property type="entry name" value="Actin-like ATPase domain"/>
    <property type="match status" value="2"/>
</dbReference>
<protein>
    <recommendedName>
        <fullName evidence="1">Cell division protein FtsA</fullName>
    </recommendedName>
</protein>
<comment type="function">
    <text evidence="1">Cell division protein that is involved in the assembly of the Z ring. May serve as a membrane anchor for the Z ring.</text>
</comment>
<comment type="subunit">
    <text evidence="1">Self-interacts. Interacts with FtsZ.</text>
</comment>
<comment type="subcellular location">
    <subcellularLocation>
        <location evidence="1">Cell membrane</location>
        <topology evidence="1">Peripheral membrane protein</topology>
        <orientation evidence="1">Cytoplasmic side</orientation>
    </subcellularLocation>
    <text evidence="1">Localizes to the Z ring in an FtsZ-dependent manner. Targeted to the membrane through a conserved C-terminal amphipathic helix.</text>
</comment>
<comment type="similarity">
    <text evidence="1">Belongs to the FtsA/MreB family.</text>
</comment>
<comment type="sequence caution" evidence="2">
    <conflict type="erroneous initiation">
        <sequence resource="EMBL-CDS" id="AAC45638"/>
    </conflict>
</comment>
<feature type="chain" id="PRO_0000062738" description="Cell division protein FtsA">
    <location>
        <begin position="1"/>
        <end position="440"/>
    </location>
</feature>
<feature type="sequence conflict" description="In Ref. 1; AAC45638." evidence="2" ref="1">
    <original>R</original>
    <variation>C</variation>
    <location>
        <position position="108"/>
    </location>
</feature>
<feature type="sequence conflict" description="In Ref. 1." evidence="2" ref="1">
    <original>MPGIVDLAQEIF</original>
    <variation>IARYCRFRRKRFL</variation>
    <location>
        <begin position="331"/>
        <end position="342"/>
    </location>
</feature>
<evidence type="ECO:0000255" key="1">
    <source>
        <dbReference type="HAMAP-Rule" id="MF_02033"/>
    </source>
</evidence>
<evidence type="ECO:0000305" key="2"/>
<name>FTSA_ENTFA</name>
<accession>O07111</accession>